<name>METXS_BURM1</name>
<accession>A9AC42</accession>
<evidence type="ECO:0000255" key="1">
    <source>
        <dbReference type="HAMAP-Rule" id="MF_00296"/>
    </source>
</evidence>
<comment type="function">
    <text evidence="1">Transfers a succinyl group from succinyl-CoA to L-homoserine, forming succinyl-L-homoserine.</text>
</comment>
<comment type="catalytic activity">
    <reaction evidence="1">
        <text>L-homoserine + succinyl-CoA = O-succinyl-L-homoserine + CoA</text>
        <dbReference type="Rhea" id="RHEA:22008"/>
        <dbReference type="ChEBI" id="CHEBI:57287"/>
        <dbReference type="ChEBI" id="CHEBI:57292"/>
        <dbReference type="ChEBI" id="CHEBI:57476"/>
        <dbReference type="ChEBI" id="CHEBI:57661"/>
        <dbReference type="EC" id="2.3.1.46"/>
    </reaction>
</comment>
<comment type="pathway">
    <text evidence="1">Amino-acid biosynthesis; L-methionine biosynthesis via de novo pathway; O-succinyl-L-homoserine from L-homoserine: step 1/1.</text>
</comment>
<comment type="subunit">
    <text evidence="1">Homodimer.</text>
</comment>
<comment type="subcellular location">
    <subcellularLocation>
        <location evidence="1">Cytoplasm</location>
    </subcellularLocation>
</comment>
<comment type="similarity">
    <text evidence="1">Belongs to the AB hydrolase superfamily. MetX family.</text>
</comment>
<reference key="1">
    <citation type="submission" date="2007-10" db="EMBL/GenBank/DDBJ databases">
        <title>Complete sequence of chromosome 1 of Burkholderia multivorans ATCC 17616.</title>
        <authorList>
            <person name="Copeland A."/>
            <person name="Lucas S."/>
            <person name="Lapidus A."/>
            <person name="Barry K."/>
            <person name="Glavina del Rio T."/>
            <person name="Dalin E."/>
            <person name="Tice H."/>
            <person name="Pitluck S."/>
            <person name="Chain P."/>
            <person name="Malfatti S."/>
            <person name="Shin M."/>
            <person name="Vergez L."/>
            <person name="Schmutz J."/>
            <person name="Larimer F."/>
            <person name="Land M."/>
            <person name="Hauser L."/>
            <person name="Kyrpides N."/>
            <person name="Kim E."/>
            <person name="Tiedje J."/>
            <person name="Richardson P."/>
        </authorList>
    </citation>
    <scope>NUCLEOTIDE SEQUENCE [LARGE SCALE GENOMIC DNA]</scope>
    <source>
        <strain>ATCC 17616 / 249</strain>
    </source>
</reference>
<reference key="2">
    <citation type="submission" date="2007-04" db="EMBL/GenBank/DDBJ databases">
        <title>Complete genome sequence of Burkholderia multivorans ATCC 17616.</title>
        <authorList>
            <person name="Ohtsubo Y."/>
            <person name="Yamashita A."/>
            <person name="Kurokawa K."/>
            <person name="Takami H."/>
            <person name="Yuhara S."/>
            <person name="Nishiyama E."/>
            <person name="Endo R."/>
            <person name="Miyazaki R."/>
            <person name="Ono A."/>
            <person name="Yano K."/>
            <person name="Ito M."/>
            <person name="Sota M."/>
            <person name="Yuji N."/>
            <person name="Hattori M."/>
            <person name="Tsuda M."/>
        </authorList>
    </citation>
    <scope>NUCLEOTIDE SEQUENCE [LARGE SCALE GENOMIC DNA]</scope>
    <source>
        <strain>ATCC 17616 / 249</strain>
    </source>
</reference>
<sequence>MESIGIVAPQTMHFAEPLRLQSGSVIGNYQLVVETYGELNAARSNAVLVCHALNASHHVAGVYADDPRSTGWWDNMVGPGKPLDTNRFFVIGVNNLGSCFGSTGPMSIDPSTGKPYGARFPVVTVEDWVHAQARVADAFGIERFAAVMGGSLGGMQALAWSLMYPERVAHCIDIASTPKLSAQNIAFNEVARSAILSDPDFHGGDYYAHGVKPKRGLRVARMIGHITYLSDDDMAEKFGRALRRADGALDAYNFSFDVEFEVESYLRYQGDKFADYFDANTYLLITRALDYFDPAKAFDGNLTAALAHTQAKYLIASFSTDWRFAPARSREIVKALLDNKRTVSYAEIDAPHGHDAFLLDDARYHNLIRAYYERIANEVGA</sequence>
<proteinExistence type="inferred from homology"/>
<protein>
    <recommendedName>
        <fullName evidence="1">Homoserine O-succinyltransferase</fullName>
        <shortName evidence="1">HST</shortName>
        <ecNumber evidence="1">2.3.1.46</ecNumber>
    </recommendedName>
    <alternativeName>
        <fullName evidence="1">Homoserine transsuccinylase</fullName>
        <shortName evidence="1">HTS</shortName>
    </alternativeName>
</protein>
<gene>
    <name evidence="1" type="primary">metXS</name>
    <name type="ordered locus">Bmul_3096</name>
    <name type="ordered locus">BMULJ_00135</name>
</gene>
<organism>
    <name type="scientific">Burkholderia multivorans (strain ATCC 17616 / 249)</name>
    <dbReference type="NCBI Taxonomy" id="395019"/>
    <lineage>
        <taxon>Bacteria</taxon>
        <taxon>Pseudomonadati</taxon>
        <taxon>Pseudomonadota</taxon>
        <taxon>Betaproteobacteria</taxon>
        <taxon>Burkholderiales</taxon>
        <taxon>Burkholderiaceae</taxon>
        <taxon>Burkholderia</taxon>
        <taxon>Burkholderia cepacia complex</taxon>
    </lineage>
</organism>
<dbReference type="EC" id="2.3.1.46" evidence="1"/>
<dbReference type="EMBL" id="CP000868">
    <property type="protein sequence ID" value="ABX16780.1"/>
    <property type="molecule type" value="Genomic_DNA"/>
</dbReference>
<dbReference type="EMBL" id="AP009385">
    <property type="protein sequence ID" value="BAG42113.1"/>
    <property type="molecule type" value="Genomic_DNA"/>
</dbReference>
<dbReference type="SMR" id="A9AC42"/>
<dbReference type="STRING" id="395019.BMULJ_00135"/>
<dbReference type="ESTHER" id="burca-metx">
    <property type="family name" value="Homoserine_transacetylase"/>
</dbReference>
<dbReference type="KEGG" id="bmj:BMULJ_00135"/>
<dbReference type="KEGG" id="bmu:Bmul_3096"/>
<dbReference type="eggNOG" id="COG2021">
    <property type="taxonomic scope" value="Bacteria"/>
</dbReference>
<dbReference type="HOGENOM" id="CLU_028760_1_2_4"/>
<dbReference type="UniPathway" id="UPA00051">
    <property type="reaction ID" value="UER00075"/>
</dbReference>
<dbReference type="Proteomes" id="UP000008815">
    <property type="component" value="Chromosome 1"/>
</dbReference>
<dbReference type="GO" id="GO:0005737">
    <property type="term" value="C:cytoplasm"/>
    <property type="evidence" value="ECO:0007669"/>
    <property type="project" value="UniProtKB-SubCell"/>
</dbReference>
<dbReference type="GO" id="GO:0004414">
    <property type="term" value="F:homoserine O-acetyltransferase activity"/>
    <property type="evidence" value="ECO:0007669"/>
    <property type="project" value="TreeGrafter"/>
</dbReference>
<dbReference type="GO" id="GO:0008899">
    <property type="term" value="F:homoserine O-succinyltransferase activity"/>
    <property type="evidence" value="ECO:0007669"/>
    <property type="project" value="UniProtKB-UniRule"/>
</dbReference>
<dbReference type="GO" id="GO:0009092">
    <property type="term" value="P:homoserine metabolic process"/>
    <property type="evidence" value="ECO:0007669"/>
    <property type="project" value="TreeGrafter"/>
</dbReference>
<dbReference type="GO" id="GO:0009086">
    <property type="term" value="P:methionine biosynthetic process"/>
    <property type="evidence" value="ECO:0007669"/>
    <property type="project" value="UniProtKB-UniRule"/>
</dbReference>
<dbReference type="FunFam" id="1.10.1740.110:FF:000001">
    <property type="entry name" value="Homoserine O-acetyltransferase"/>
    <property type="match status" value="1"/>
</dbReference>
<dbReference type="Gene3D" id="1.10.1740.110">
    <property type="match status" value="1"/>
</dbReference>
<dbReference type="Gene3D" id="3.40.50.1820">
    <property type="entry name" value="alpha/beta hydrolase"/>
    <property type="match status" value="1"/>
</dbReference>
<dbReference type="HAMAP" id="MF_00296">
    <property type="entry name" value="MetX_acyltransf"/>
    <property type="match status" value="1"/>
</dbReference>
<dbReference type="InterPro" id="IPR000073">
    <property type="entry name" value="AB_hydrolase_1"/>
</dbReference>
<dbReference type="InterPro" id="IPR029058">
    <property type="entry name" value="AB_hydrolase_fold"/>
</dbReference>
<dbReference type="InterPro" id="IPR008220">
    <property type="entry name" value="HAT_MetX-like"/>
</dbReference>
<dbReference type="NCBIfam" id="TIGR01392">
    <property type="entry name" value="homoserO_Ac_trn"/>
    <property type="match status" value="1"/>
</dbReference>
<dbReference type="NCBIfam" id="NF001209">
    <property type="entry name" value="PRK00175.1"/>
    <property type="match status" value="1"/>
</dbReference>
<dbReference type="PANTHER" id="PTHR32268">
    <property type="entry name" value="HOMOSERINE O-ACETYLTRANSFERASE"/>
    <property type="match status" value="1"/>
</dbReference>
<dbReference type="PANTHER" id="PTHR32268:SF11">
    <property type="entry name" value="HOMOSERINE O-ACETYLTRANSFERASE"/>
    <property type="match status" value="1"/>
</dbReference>
<dbReference type="Pfam" id="PF00561">
    <property type="entry name" value="Abhydrolase_1"/>
    <property type="match status" value="1"/>
</dbReference>
<dbReference type="PIRSF" id="PIRSF000443">
    <property type="entry name" value="Homoser_Ac_trans"/>
    <property type="match status" value="1"/>
</dbReference>
<dbReference type="SUPFAM" id="SSF53474">
    <property type="entry name" value="alpha/beta-Hydrolases"/>
    <property type="match status" value="1"/>
</dbReference>
<feature type="chain" id="PRO_1000115215" description="Homoserine O-succinyltransferase">
    <location>
        <begin position="1"/>
        <end position="381"/>
    </location>
</feature>
<feature type="domain" description="AB hydrolase-1" evidence="1">
    <location>
        <begin position="45"/>
        <end position="360"/>
    </location>
</feature>
<feature type="active site" description="Nucleophile" evidence="1">
    <location>
        <position position="151"/>
    </location>
</feature>
<feature type="active site" evidence="1">
    <location>
        <position position="321"/>
    </location>
</feature>
<feature type="active site" evidence="1">
    <location>
        <position position="354"/>
    </location>
</feature>
<feature type="binding site" evidence="1">
    <location>
        <position position="221"/>
    </location>
    <ligand>
        <name>substrate</name>
    </ligand>
</feature>
<feature type="binding site" evidence="1">
    <location>
        <position position="355"/>
    </location>
    <ligand>
        <name>substrate</name>
    </ligand>
</feature>
<feature type="site" description="Important for acyl-CoA specificity" evidence="1">
    <location>
        <position position="323"/>
    </location>
</feature>
<keyword id="KW-0012">Acyltransferase</keyword>
<keyword id="KW-0028">Amino-acid biosynthesis</keyword>
<keyword id="KW-0963">Cytoplasm</keyword>
<keyword id="KW-0486">Methionine biosynthesis</keyword>
<keyword id="KW-1185">Reference proteome</keyword>
<keyword id="KW-0808">Transferase</keyword>